<protein>
    <recommendedName>
        <fullName evidence="1">tRNA pseudouridine synthase A</fullName>
        <ecNumber evidence="1">5.4.99.12</ecNumber>
    </recommendedName>
    <alternativeName>
        <fullName evidence="1">tRNA pseudouridine(38-40) synthase</fullName>
    </alternativeName>
    <alternativeName>
        <fullName evidence="1">tRNA pseudouridylate synthase I</fullName>
    </alternativeName>
    <alternativeName>
        <fullName evidence="1">tRNA-uridine isomerase I</fullName>
    </alternativeName>
</protein>
<evidence type="ECO:0000255" key="1">
    <source>
        <dbReference type="HAMAP-Rule" id="MF_00171"/>
    </source>
</evidence>
<reference key="1">
    <citation type="submission" date="2008-10" db="EMBL/GenBank/DDBJ databases">
        <title>Genome sequence of Ureaplasma urealyticum serovar 10 ATCC-33699.</title>
        <authorList>
            <person name="Shrivastava S."/>
            <person name="Methe B.A."/>
            <person name="Glass J."/>
            <person name="White K."/>
            <person name="Duffy L.B."/>
        </authorList>
    </citation>
    <scope>NUCLEOTIDE SEQUENCE [LARGE SCALE GENOMIC DNA]</scope>
    <source>
        <strain>ATCC 33699 / Western</strain>
    </source>
</reference>
<sequence length="241" mass="28344">MNYKISIRYDGSLFYGWAKQPQKRTVQEHLETVFKTIFKINDIKIIGSGRTDRGVHAYEQVFSVNHHQLNYEPQVIYQALCSQIDPDVQILKVQSVHDTFHAQHDAISKTYQYIINDYEFDLFKHNYEYFIHQKINDQKLLEALELFVGEYDFKSFSTSELPLTTRKINWVKITRNTRLEIYINGNGFLKNMVRMIISACIDYVFNKISLTQIKTLLTNPKKGASVKLAPPCGLYLYKVYY</sequence>
<feature type="chain" id="PRO_1000097803" description="tRNA pseudouridine synthase A">
    <location>
        <begin position="1"/>
        <end position="241"/>
    </location>
</feature>
<feature type="active site" description="Nucleophile" evidence="1">
    <location>
        <position position="52"/>
    </location>
</feature>
<feature type="binding site" evidence="1">
    <location>
        <position position="111"/>
    </location>
    <ligand>
        <name>substrate</name>
    </ligand>
</feature>
<comment type="function">
    <text evidence="1">Formation of pseudouridine at positions 38, 39 and 40 in the anticodon stem and loop of transfer RNAs.</text>
</comment>
<comment type="catalytic activity">
    <reaction evidence="1">
        <text>uridine(38/39/40) in tRNA = pseudouridine(38/39/40) in tRNA</text>
        <dbReference type="Rhea" id="RHEA:22376"/>
        <dbReference type="Rhea" id="RHEA-COMP:10085"/>
        <dbReference type="Rhea" id="RHEA-COMP:10087"/>
        <dbReference type="ChEBI" id="CHEBI:65314"/>
        <dbReference type="ChEBI" id="CHEBI:65315"/>
        <dbReference type="EC" id="5.4.99.12"/>
    </reaction>
</comment>
<comment type="subunit">
    <text evidence="1">Homodimer.</text>
</comment>
<comment type="similarity">
    <text evidence="1">Belongs to the tRNA pseudouridine synthase TruA family.</text>
</comment>
<name>TRUA_UREU1</name>
<organism>
    <name type="scientific">Ureaplasma urealyticum serovar 10 (strain ATCC 33699 / Western)</name>
    <dbReference type="NCBI Taxonomy" id="565575"/>
    <lineage>
        <taxon>Bacteria</taxon>
        <taxon>Bacillati</taxon>
        <taxon>Mycoplasmatota</taxon>
        <taxon>Mycoplasmoidales</taxon>
        <taxon>Mycoplasmoidaceae</taxon>
        <taxon>Ureaplasma</taxon>
    </lineage>
</organism>
<gene>
    <name evidence="1" type="primary">truA</name>
    <name type="ordered locus">UUR10_0627</name>
</gene>
<keyword id="KW-0413">Isomerase</keyword>
<keyword id="KW-0819">tRNA processing</keyword>
<dbReference type="EC" id="5.4.99.12" evidence="1"/>
<dbReference type="EMBL" id="CP001184">
    <property type="protein sequence ID" value="ACI59955.1"/>
    <property type="molecule type" value="Genomic_DNA"/>
</dbReference>
<dbReference type="RefSeq" id="WP_004025904.1">
    <property type="nucleotide sequence ID" value="NC_011374.1"/>
</dbReference>
<dbReference type="SMR" id="B5ZC44"/>
<dbReference type="STRING" id="565575.UUR10_0627"/>
<dbReference type="GeneID" id="93849084"/>
<dbReference type="KEGG" id="uue:UUR10_0627"/>
<dbReference type="eggNOG" id="COG0101">
    <property type="taxonomic scope" value="Bacteria"/>
</dbReference>
<dbReference type="HOGENOM" id="CLU_014673_0_1_14"/>
<dbReference type="OrthoDB" id="9811823at2"/>
<dbReference type="Proteomes" id="UP000002018">
    <property type="component" value="Chromosome"/>
</dbReference>
<dbReference type="GO" id="GO:0003723">
    <property type="term" value="F:RNA binding"/>
    <property type="evidence" value="ECO:0007669"/>
    <property type="project" value="InterPro"/>
</dbReference>
<dbReference type="GO" id="GO:0160147">
    <property type="term" value="F:tRNA pseudouridine(38-40) synthase activity"/>
    <property type="evidence" value="ECO:0007669"/>
    <property type="project" value="UniProtKB-EC"/>
</dbReference>
<dbReference type="GO" id="GO:0031119">
    <property type="term" value="P:tRNA pseudouridine synthesis"/>
    <property type="evidence" value="ECO:0007669"/>
    <property type="project" value="UniProtKB-UniRule"/>
</dbReference>
<dbReference type="CDD" id="cd02570">
    <property type="entry name" value="PseudoU_synth_EcTruA"/>
    <property type="match status" value="1"/>
</dbReference>
<dbReference type="Gene3D" id="3.30.70.660">
    <property type="entry name" value="Pseudouridine synthase I, catalytic domain, C-terminal subdomain"/>
    <property type="match status" value="1"/>
</dbReference>
<dbReference type="Gene3D" id="3.30.70.580">
    <property type="entry name" value="Pseudouridine synthase I, catalytic domain, N-terminal subdomain"/>
    <property type="match status" value="1"/>
</dbReference>
<dbReference type="HAMAP" id="MF_00171">
    <property type="entry name" value="TruA"/>
    <property type="match status" value="1"/>
</dbReference>
<dbReference type="InterPro" id="IPR020103">
    <property type="entry name" value="PsdUridine_synth_cat_dom_sf"/>
</dbReference>
<dbReference type="InterPro" id="IPR001406">
    <property type="entry name" value="PsdUridine_synth_TruA"/>
</dbReference>
<dbReference type="InterPro" id="IPR020097">
    <property type="entry name" value="PsdUridine_synth_TruA_a/b_dom"/>
</dbReference>
<dbReference type="InterPro" id="IPR020095">
    <property type="entry name" value="PsdUridine_synth_TruA_C"/>
</dbReference>
<dbReference type="InterPro" id="IPR020094">
    <property type="entry name" value="TruA/RsuA/RluB/E/F_N"/>
</dbReference>
<dbReference type="NCBIfam" id="TIGR00071">
    <property type="entry name" value="hisT_truA"/>
    <property type="match status" value="1"/>
</dbReference>
<dbReference type="PANTHER" id="PTHR11142">
    <property type="entry name" value="PSEUDOURIDYLATE SYNTHASE"/>
    <property type="match status" value="1"/>
</dbReference>
<dbReference type="PANTHER" id="PTHR11142:SF0">
    <property type="entry name" value="TRNA PSEUDOURIDINE SYNTHASE-LIKE 1"/>
    <property type="match status" value="1"/>
</dbReference>
<dbReference type="Pfam" id="PF01416">
    <property type="entry name" value="PseudoU_synth_1"/>
    <property type="match status" value="2"/>
</dbReference>
<dbReference type="PIRSF" id="PIRSF001430">
    <property type="entry name" value="tRNA_psdUrid_synth"/>
    <property type="match status" value="1"/>
</dbReference>
<dbReference type="SUPFAM" id="SSF55120">
    <property type="entry name" value="Pseudouridine synthase"/>
    <property type="match status" value="1"/>
</dbReference>
<accession>B5ZC44</accession>
<proteinExistence type="inferred from homology"/>